<name>ASB1_HUMAN</name>
<feature type="chain" id="PRO_0000066923" description="Ankyrin repeat and SOCS box protein 1">
    <location>
        <begin position="1"/>
        <end position="335"/>
    </location>
</feature>
<feature type="repeat" description="ANK 1">
    <location>
        <begin position="36"/>
        <end position="68"/>
    </location>
</feature>
<feature type="repeat" description="ANK 2">
    <location>
        <begin position="77"/>
        <end position="106"/>
    </location>
</feature>
<feature type="repeat" description="ANK 3">
    <location>
        <begin position="110"/>
        <end position="139"/>
    </location>
</feature>
<feature type="repeat" description="ANK 4">
    <location>
        <begin position="143"/>
        <end position="172"/>
    </location>
</feature>
<feature type="repeat" description="ANK 5">
    <location>
        <begin position="191"/>
        <end position="220"/>
    </location>
</feature>
<feature type="repeat" description="ANK 6">
    <location>
        <begin position="235"/>
        <end position="265"/>
    </location>
</feature>
<feature type="domain" description="SOCS box" evidence="3">
    <location>
        <begin position="286"/>
        <end position="335"/>
    </location>
</feature>
<gene>
    <name type="primary">ASB1</name>
    <name type="synonym">KIAA1146</name>
</gene>
<dbReference type="EMBL" id="AF156777">
    <property type="protein sequence ID" value="AAD41894.1"/>
    <property type="molecule type" value="mRNA"/>
</dbReference>
<dbReference type="EMBL" id="AC016999">
    <property type="protein sequence ID" value="AAX88934.1"/>
    <property type="molecule type" value="Genomic_DNA"/>
</dbReference>
<dbReference type="EMBL" id="BC014528">
    <property type="protein sequence ID" value="AAH14528.1"/>
    <property type="molecule type" value="mRNA"/>
</dbReference>
<dbReference type="EMBL" id="AB032972">
    <property type="protein sequence ID" value="BAA86460.1"/>
    <property type="molecule type" value="mRNA"/>
</dbReference>
<dbReference type="CCDS" id="CCDS33416.1"/>
<dbReference type="RefSeq" id="NP_001035535.1">
    <property type="nucleotide sequence ID" value="NM_001040445.3"/>
</dbReference>
<dbReference type="SMR" id="Q9Y576"/>
<dbReference type="BioGRID" id="119668">
    <property type="interactions" value="26"/>
</dbReference>
<dbReference type="CORUM" id="Q9Y576"/>
<dbReference type="FunCoup" id="Q9Y576">
    <property type="interactions" value="251"/>
</dbReference>
<dbReference type="IntAct" id="Q9Y576">
    <property type="interactions" value="11"/>
</dbReference>
<dbReference type="MINT" id="Q9Y576"/>
<dbReference type="STRING" id="9606.ENSP00000264607"/>
<dbReference type="iPTMnet" id="Q9Y576"/>
<dbReference type="PhosphoSitePlus" id="Q9Y576"/>
<dbReference type="BioMuta" id="ASB1"/>
<dbReference type="DMDM" id="20532005"/>
<dbReference type="jPOST" id="Q9Y576"/>
<dbReference type="MassIVE" id="Q9Y576"/>
<dbReference type="PaxDb" id="9606-ENSP00000264607"/>
<dbReference type="PeptideAtlas" id="Q9Y576"/>
<dbReference type="ProteomicsDB" id="86308"/>
<dbReference type="Pumba" id="Q9Y576"/>
<dbReference type="Antibodypedia" id="1137">
    <property type="antibodies" value="31 antibodies from 13 providers"/>
</dbReference>
<dbReference type="DNASU" id="51665"/>
<dbReference type="Ensembl" id="ENST00000264607.9">
    <property type="protein sequence ID" value="ENSP00000264607.4"/>
    <property type="gene ID" value="ENSG00000065802.12"/>
</dbReference>
<dbReference type="GeneID" id="51665"/>
<dbReference type="KEGG" id="hsa:51665"/>
<dbReference type="MANE-Select" id="ENST00000264607.9">
    <property type="protein sequence ID" value="ENSP00000264607.4"/>
    <property type="RefSeq nucleotide sequence ID" value="NM_001040445.3"/>
    <property type="RefSeq protein sequence ID" value="NP_001035535.1"/>
</dbReference>
<dbReference type="UCSC" id="uc002vyg.4">
    <property type="organism name" value="human"/>
</dbReference>
<dbReference type="AGR" id="HGNC:16011"/>
<dbReference type="CTD" id="51665"/>
<dbReference type="DisGeNET" id="51665"/>
<dbReference type="GeneCards" id="ASB1"/>
<dbReference type="HGNC" id="HGNC:16011">
    <property type="gene designation" value="ASB1"/>
</dbReference>
<dbReference type="HPA" id="ENSG00000065802">
    <property type="expression patterns" value="Low tissue specificity"/>
</dbReference>
<dbReference type="MalaCards" id="ASB1"/>
<dbReference type="MIM" id="605758">
    <property type="type" value="gene"/>
</dbReference>
<dbReference type="neXtProt" id="NX_Q9Y576"/>
<dbReference type="OpenTargets" id="ENSG00000065802"/>
<dbReference type="PharmGKB" id="PA25027"/>
<dbReference type="VEuPathDB" id="HostDB:ENSG00000065802"/>
<dbReference type="eggNOG" id="KOG0504">
    <property type="taxonomic scope" value="Eukaryota"/>
</dbReference>
<dbReference type="GeneTree" id="ENSGT00940000153969"/>
<dbReference type="HOGENOM" id="CLU_053981_0_0_1"/>
<dbReference type="InParanoid" id="Q9Y576"/>
<dbReference type="OMA" id="AYHHLEC"/>
<dbReference type="OrthoDB" id="4735278at2759"/>
<dbReference type="PAN-GO" id="Q9Y576">
    <property type="GO annotations" value="2 GO annotations based on evolutionary models"/>
</dbReference>
<dbReference type="PhylomeDB" id="Q9Y576"/>
<dbReference type="TreeFam" id="TF331945"/>
<dbReference type="PathwayCommons" id="Q9Y576"/>
<dbReference type="Reactome" id="R-HSA-8951664">
    <property type="pathway name" value="Neddylation"/>
</dbReference>
<dbReference type="Reactome" id="R-HSA-983168">
    <property type="pathway name" value="Antigen processing: Ubiquitination &amp; Proteasome degradation"/>
</dbReference>
<dbReference type="SignaLink" id="Q9Y576"/>
<dbReference type="UniPathway" id="UPA00143"/>
<dbReference type="BioGRID-ORCS" id="51665">
    <property type="hits" value="14 hits in 1194 CRISPR screens"/>
</dbReference>
<dbReference type="ChiTaRS" id="ASB1">
    <property type="organism name" value="human"/>
</dbReference>
<dbReference type="GeneWiki" id="ASB1"/>
<dbReference type="GenomeRNAi" id="51665"/>
<dbReference type="Pharos" id="Q9Y576">
    <property type="development level" value="Tdark"/>
</dbReference>
<dbReference type="PRO" id="PR:Q9Y576"/>
<dbReference type="Proteomes" id="UP000005640">
    <property type="component" value="Chromosome 2"/>
</dbReference>
<dbReference type="RNAct" id="Q9Y576">
    <property type="molecule type" value="protein"/>
</dbReference>
<dbReference type="Bgee" id="ENSG00000065802">
    <property type="expression patterns" value="Expressed in apex of heart and 186 other cell types or tissues"/>
</dbReference>
<dbReference type="ExpressionAtlas" id="Q9Y576">
    <property type="expression patterns" value="baseline and differential"/>
</dbReference>
<dbReference type="GO" id="GO:0005829">
    <property type="term" value="C:cytosol"/>
    <property type="evidence" value="ECO:0000304"/>
    <property type="project" value="Reactome"/>
</dbReference>
<dbReference type="GO" id="GO:0000151">
    <property type="term" value="C:ubiquitin ligase complex"/>
    <property type="evidence" value="ECO:0000314"/>
    <property type="project" value="UniProtKB"/>
</dbReference>
<dbReference type="GO" id="GO:1990756">
    <property type="term" value="F:ubiquitin-like ligase-substrate adaptor activity"/>
    <property type="evidence" value="ECO:0000318"/>
    <property type="project" value="GO_Central"/>
</dbReference>
<dbReference type="GO" id="GO:0035556">
    <property type="term" value="P:intracellular signal transduction"/>
    <property type="evidence" value="ECO:0007669"/>
    <property type="project" value="InterPro"/>
</dbReference>
<dbReference type="GO" id="GO:0030539">
    <property type="term" value="P:male genitalia development"/>
    <property type="evidence" value="ECO:0007669"/>
    <property type="project" value="Ensembl"/>
</dbReference>
<dbReference type="GO" id="GO:0001818">
    <property type="term" value="P:negative regulation of cytokine production"/>
    <property type="evidence" value="ECO:0000303"/>
    <property type="project" value="UniProtKB"/>
</dbReference>
<dbReference type="GO" id="GO:0043161">
    <property type="term" value="P:proteasome-mediated ubiquitin-dependent protein catabolic process"/>
    <property type="evidence" value="ECO:0000318"/>
    <property type="project" value="GO_Central"/>
</dbReference>
<dbReference type="GO" id="GO:0016567">
    <property type="term" value="P:protein ubiquitination"/>
    <property type="evidence" value="ECO:0000314"/>
    <property type="project" value="UniProtKB"/>
</dbReference>
<dbReference type="CDD" id="cd03720">
    <property type="entry name" value="SOCS_ASB1"/>
    <property type="match status" value="1"/>
</dbReference>
<dbReference type="FunFam" id="1.10.750.20:FF:000001">
    <property type="entry name" value="Ankyrin repeat and SOCS box containing 1"/>
    <property type="match status" value="1"/>
</dbReference>
<dbReference type="FunFam" id="1.25.40.20:FF:000119">
    <property type="entry name" value="Ankyrin repeat and SOCS box containing 1"/>
    <property type="match status" value="1"/>
</dbReference>
<dbReference type="Gene3D" id="1.25.40.20">
    <property type="entry name" value="Ankyrin repeat-containing domain"/>
    <property type="match status" value="1"/>
</dbReference>
<dbReference type="Gene3D" id="1.10.750.20">
    <property type="entry name" value="SOCS box"/>
    <property type="match status" value="1"/>
</dbReference>
<dbReference type="InterPro" id="IPR002110">
    <property type="entry name" value="Ankyrin_rpt"/>
</dbReference>
<dbReference type="InterPro" id="IPR036770">
    <property type="entry name" value="Ankyrin_rpt-contain_sf"/>
</dbReference>
<dbReference type="InterPro" id="IPR037331">
    <property type="entry name" value="ASB1_SOCS"/>
</dbReference>
<dbReference type="InterPro" id="IPR001496">
    <property type="entry name" value="SOCS_box"/>
</dbReference>
<dbReference type="InterPro" id="IPR036036">
    <property type="entry name" value="SOCS_box-like_dom_sf"/>
</dbReference>
<dbReference type="PANTHER" id="PTHR24173:SF27">
    <property type="entry name" value="ANKYRIN REPEAT AND SOCS BOX PROTEIN 1"/>
    <property type="match status" value="1"/>
</dbReference>
<dbReference type="PANTHER" id="PTHR24173">
    <property type="entry name" value="ANKYRIN REPEAT CONTAINING"/>
    <property type="match status" value="1"/>
</dbReference>
<dbReference type="Pfam" id="PF00023">
    <property type="entry name" value="Ank"/>
    <property type="match status" value="1"/>
</dbReference>
<dbReference type="Pfam" id="PF12796">
    <property type="entry name" value="Ank_2"/>
    <property type="match status" value="1"/>
</dbReference>
<dbReference type="Pfam" id="PF07525">
    <property type="entry name" value="SOCS_box"/>
    <property type="match status" value="1"/>
</dbReference>
<dbReference type="PRINTS" id="PR01415">
    <property type="entry name" value="ANKYRIN"/>
</dbReference>
<dbReference type="SMART" id="SM00248">
    <property type="entry name" value="ANK"/>
    <property type="match status" value="5"/>
</dbReference>
<dbReference type="SMART" id="SM00969">
    <property type="entry name" value="SOCS_box"/>
    <property type="match status" value="1"/>
</dbReference>
<dbReference type="SUPFAM" id="SSF48403">
    <property type="entry name" value="Ankyrin repeat"/>
    <property type="match status" value="1"/>
</dbReference>
<dbReference type="SUPFAM" id="SSF158235">
    <property type="entry name" value="SOCS box-like"/>
    <property type="match status" value="1"/>
</dbReference>
<dbReference type="PROSITE" id="PS50297">
    <property type="entry name" value="ANK_REP_REGION"/>
    <property type="match status" value="1"/>
</dbReference>
<dbReference type="PROSITE" id="PS50088">
    <property type="entry name" value="ANK_REPEAT"/>
    <property type="match status" value="3"/>
</dbReference>
<dbReference type="PROSITE" id="PS50225">
    <property type="entry name" value="SOCS"/>
    <property type="match status" value="1"/>
</dbReference>
<proteinExistence type="evidence at protein level"/>
<organism>
    <name type="scientific">Homo sapiens</name>
    <name type="common">Human</name>
    <dbReference type="NCBI Taxonomy" id="9606"/>
    <lineage>
        <taxon>Eukaryota</taxon>
        <taxon>Metazoa</taxon>
        <taxon>Chordata</taxon>
        <taxon>Craniata</taxon>
        <taxon>Vertebrata</taxon>
        <taxon>Euteleostomi</taxon>
        <taxon>Mammalia</taxon>
        <taxon>Eutheria</taxon>
        <taxon>Euarchontoglires</taxon>
        <taxon>Primates</taxon>
        <taxon>Haplorrhini</taxon>
        <taxon>Catarrhini</taxon>
        <taxon>Hominidae</taxon>
        <taxon>Homo</taxon>
    </lineage>
</organism>
<accession>Q9Y576</accession>
<accession>A6NL50</accession>
<accession>Q4ZG29</accession>
<accession>Q9ULS4</accession>
<reference key="1">
    <citation type="journal article" date="2000" name="Gene">
        <title>Cloning and characterization of the genes encoding the ankyrin repeat and SOCS box-containing proteins Asb-1, Asb-2, Asb-3 and Asb-4.</title>
        <authorList>
            <person name="Kile B.T."/>
            <person name="Viney E.M."/>
            <person name="Willson T.A."/>
            <person name="Brodnicki T.C."/>
            <person name="Cancilla M.R."/>
            <person name="Herlihy A.S."/>
            <person name="Croker B.A."/>
            <person name="Baca M."/>
            <person name="Nicola N.A."/>
            <person name="Hilton D.J."/>
            <person name="Alexander W.S."/>
        </authorList>
    </citation>
    <scope>NUCLEOTIDE SEQUENCE [MRNA]</scope>
</reference>
<reference key="2">
    <citation type="journal article" date="2005" name="Nature">
        <title>Generation and annotation of the DNA sequences of human chromosomes 2 and 4.</title>
        <authorList>
            <person name="Hillier L.W."/>
            <person name="Graves T.A."/>
            <person name="Fulton R.S."/>
            <person name="Fulton L.A."/>
            <person name="Pepin K.H."/>
            <person name="Minx P."/>
            <person name="Wagner-McPherson C."/>
            <person name="Layman D."/>
            <person name="Wylie K."/>
            <person name="Sekhon M."/>
            <person name="Becker M.C."/>
            <person name="Fewell G.A."/>
            <person name="Delehaunty K.D."/>
            <person name="Miner T.L."/>
            <person name="Nash W.E."/>
            <person name="Kremitzki C."/>
            <person name="Oddy L."/>
            <person name="Du H."/>
            <person name="Sun H."/>
            <person name="Bradshaw-Cordum H."/>
            <person name="Ali J."/>
            <person name="Carter J."/>
            <person name="Cordes M."/>
            <person name="Harris A."/>
            <person name="Isak A."/>
            <person name="van Brunt A."/>
            <person name="Nguyen C."/>
            <person name="Du F."/>
            <person name="Courtney L."/>
            <person name="Kalicki J."/>
            <person name="Ozersky P."/>
            <person name="Abbott S."/>
            <person name="Armstrong J."/>
            <person name="Belter E.A."/>
            <person name="Caruso L."/>
            <person name="Cedroni M."/>
            <person name="Cotton M."/>
            <person name="Davidson T."/>
            <person name="Desai A."/>
            <person name="Elliott G."/>
            <person name="Erb T."/>
            <person name="Fronick C."/>
            <person name="Gaige T."/>
            <person name="Haakenson W."/>
            <person name="Haglund K."/>
            <person name="Holmes A."/>
            <person name="Harkins R."/>
            <person name="Kim K."/>
            <person name="Kruchowski S.S."/>
            <person name="Strong C.M."/>
            <person name="Grewal N."/>
            <person name="Goyea E."/>
            <person name="Hou S."/>
            <person name="Levy A."/>
            <person name="Martinka S."/>
            <person name="Mead K."/>
            <person name="McLellan M.D."/>
            <person name="Meyer R."/>
            <person name="Randall-Maher J."/>
            <person name="Tomlinson C."/>
            <person name="Dauphin-Kohlberg S."/>
            <person name="Kozlowicz-Reilly A."/>
            <person name="Shah N."/>
            <person name="Swearengen-Shahid S."/>
            <person name="Snider J."/>
            <person name="Strong J.T."/>
            <person name="Thompson J."/>
            <person name="Yoakum M."/>
            <person name="Leonard S."/>
            <person name="Pearman C."/>
            <person name="Trani L."/>
            <person name="Radionenko M."/>
            <person name="Waligorski J.E."/>
            <person name="Wang C."/>
            <person name="Rock S.M."/>
            <person name="Tin-Wollam A.-M."/>
            <person name="Maupin R."/>
            <person name="Latreille P."/>
            <person name="Wendl M.C."/>
            <person name="Yang S.-P."/>
            <person name="Pohl C."/>
            <person name="Wallis J.W."/>
            <person name="Spieth J."/>
            <person name="Bieri T.A."/>
            <person name="Berkowicz N."/>
            <person name="Nelson J.O."/>
            <person name="Osborne J."/>
            <person name="Ding L."/>
            <person name="Meyer R."/>
            <person name="Sabo A."/>
            <person name="Shotland Y."/>
            <person name="Sinha P."/>
            <person name="Wohldmann P.E."/>
            <person name="Cook L.L."/>
            <person name="Hickenbotham M.T."/>
            <person name="Eldred J."/>
            <person name="Williams D."/>
            <person name="Jones T.A."/>
            <person name="She X."/>
            <person name="Ciccarelli F.D."/>
            <person name="Izaurralde E."/>
            <person name="Taylor J."/>
            <person name="Schmutz J."/>
            <person name="Myers R.M."/>
            <person name="Cox D.R."/>
            <person name="Huang X."/>
            <person name="McPherson J.D."/>
            <person name="Mardis E.R."/>
            <person name="Clifton S.W."/>
            <person name="Warren W.C."/>
            <person name="Chinwalla A.T."/>
            <person name="Eddy S.R."/>
            <person name="Marra M.A."/>
            <person name="Ovcharenko I."/>
            <person name="Furey T.S."/>
            <person name="Miller W."/>
            <person name="Eichler E.E."/>
            <person name="Bork P."/>
            <person name="Suyama M."/>
            <person name="Torrents D."/>
            <person name="Waterston R.H."/>
            <person name="Wilson R.K."/>
        </authorList>
    </citation>
    <scope>NUCLEOTIDE SEQUENCE [LARGE SCALE GENOMIC DNA]</scope>
</reference>
<reference key="3">
    <citation type="journal article" date="2004" name="Genome Res.">
        <title>The status, quality, and expansion of the NIH full-length cDNA project: the Mammalian Gene Collection (MGC).</title>
        <authorList>
            <consortium name="The MGC Project Team"/>
        </authorList>
    </citation>
    <scope>NUCLEOTIDE SEQUENCE [LARGE SCALE MRNA]</scope>
    <source>
        <tissue>Placenta</tissue>
    </source>
</reference>
<reference key="4">
    <citation type="journal article" date="1999" name="DNA Res.">
        <title>Characterization of cDNA clones selected by the GeneMark analysis from size-fractionated cDNA libraries from human brain.</title>
        <authorList>
            <person name="Hirosawa M."/>
            <person name="Nagase T."/>
            <person name="Ishikawa K."/>
            <person name="Kikuno R."/>
            <person name="Nomura N."/>
            <person name="Ohara O."/>
        </authorList>
    </citation>
    <scope>NUCLEOTIDE SEQUENCE [LARGE SCALE MRNA] OF 65-335</scope>
    <source>
        <tissue>Brain</tissue>
    </source>
</reference>
<reference key="5">
    <citation type="journal article" date="2005" name="FEBS Lett.">
        <title>ASB proteins interact with cullin5 and Rbx2 to form E3 ubiquitin ligase complexes.</title>
        <authorList>
            <person name="Kohroki J."/>
            <person name="Nishiyama T."/>
            <person name="Nakamura T."/>
            <person name="Masuho Y."/>
        </authorList>
    </citation>
    <scope>FUNCTION AS AN E3 UBIQUITIN-PROTEIN LIGASE</scope>
    <scope>INTERACTION WITH CUL5 AND RNF7</scope>
</reference>
<reference key="6">
    <citation type="journal article" date="2011" name="Cell Res.">
        <title>Notch-induced Asb2 expression promotes protein ubiquitination by forming non-canonical E3 ligase complexes.</title>
        <authorList>
            <person name="Nie L."/>
            <person name="Zhao Y."/>
            <person name="Wu W."/>
            <person name="Yang Y.Z."/>
            <person name="Wang H.C."/>
            <person name="Sun X.H."/>
        </authorList>
    </citation>
    <scope>FUNCTION</scope>
</reference>
<reference key="7">
    <citation type="journal article" date="2021" name="Proc. Natl. Acad. Sci. U.S.A.">
        <title>An unconventional role of an ASB family protein in NF-kappaB activation and inflammatory response during microbial infection and colitis.</title>
        <authorList>
            <person name="Hou P."/>
            <person name="Jia P."/>
            <person name="Yang K."/>
            <person name="Li Z."/>
            <person name="Tian T."/>
            <person name="Lin Y."/>
            <person name="Zeng W."/>
            <person name="Xing F."/>
            <person name="Chen Y."/>
            <person name="Li C."/>
            <person name="Liu Y."/>
            <person name="Guo D."/>
        </authorList>
    </citation>
    <scope>FUNCTION</scope>
    <scope>SUBCELLULAR LOCATION</scope>
    <scope>INTERACTION WITH TAB2 AND TAB3</scope>
</reference>
<reference key="8">
    <citation type="journal article" date="2024" name="Am. J. Cancer Res.">
        <title>ASB1 inhibits prostate cancer progression by destabilizing CHCHD3 via K48-linked ubiquitination.</title>
        <authorList>
            <person name="Zhao C."/>
            <person name="Xu Z."/>
            <person name="Que H."/>
            <person name="Zhang K."/>
            <person name="Wang F."/>
            <person name="Tan R."/>
            <person name="Fan C."/>
        </authorList>
    </citation>
    <scope>FUNCTION</scope>
</reference>
<protein>
    <recommendedName>
        <fullName>Ankyrin repeat and SOCS box protein 1</fullName>
        <shortName>ASB-1</shortName>
    </recommendedName>
</protein>
<evidence type="ECO:0000250" key="1"/>
<evidence type="ECO:0000250" key="2">
    <source>
        <dbReference type="UniProtKB" id="Q9WV74"/>
    </source>
</evidence>
<evidence type="ECO:0000255" key="3">
    <source>
        <dbReference type="PROSITE-ProRule" id="PRU00194"/>
    </source>
</evidence>
<evidence type="ECO:0000269" key="4">
    <source>
    </source>
</evidence>
<evidence type="ECO:0000269" key="5">
    <source>
    </source>
</evidence>
<evidence type="ECO:0000269" key="6">
    <source>
    </source>
</evidence>
<evidence type="ECO:0000269" key="7">
    <source>
    </source>
</evidence>
<evidence type="ECO:0000305" key="8"/>
<keyword id="KW-0040">ANK repeat</keyword>
<keyword id="KW-0963">Cytoplasm</keyword>
<keyword id="KW-0217">Developmental protein</keyword>
<keyword id="KW-1267">Proteomics identification</keyword>
<keyword id="KW-1185">Reference proteome</keyword>
<keyword id="KW-0677">Repeat</keyword>
<keyword id="KW-0833">Ubl conjugation pathway</keyword>
<sequence>MAEGGSPDGRAGPGSAGRNLKEWLREQFCDHPLEHCEDTRLHDAAYVGDLQTLRSLLQEESYRSRINEKSVWCCGWLPCTPLRIAATAGHGSCVDFLIRKGAEVDLVDVKGQTALYVAVVNGHLESTQILLEAGADPNGSRHHRSTPVYHASRVGRADILKALIRYGADVDVNHHLTPDVQPRFSRRLTSLVVCPLYISAAYHNLQCFRLLLLAGANPDFNCNGPVNTQGFYRGSPGCVMDAVLRHGCEAAFVSLLVEFGANLNLVKWESLGPESRGRRKVDPEALQVFKEARSVPRTLLCLCRVAVRRALGKHRLHLIPSLPLPDPIKKFLLHE</sequence>
<comment type="function">
    <text evidence="2 4 5 6 7">Probable substrate-recognition component of a SCF-like ECS (Elongin-Cullin-SOCS-box protein) E3 ligase complex which mediates the ubiquitination and subsequent proteasomal degradation of target proteins (PubMed:16325183). Mediates Notch-induced ubiquitination and degradation of TCF3/E2A and JAK2 (PubMed:21119685). Functions as a tumor suppressor by enhancing CHCHD3 'Lys-48'-linked ubiquitination, leading to inhibition of the CHCHD3/ROS signaling pathway (PubMed:39113857). Suppresses TAB2-linked 'Lys-48' polyubiquitination and consequently facilitates the initiation of NF-kappa-B and MAPK signaling cascades (PubMed:33431678). May play a role in testis development (By similarity).</text>
</comment>
<comment type="pathway">
    <text>Protein modification; protein ubiquitination.</text>
</comment>
<comment type="subunit">
    <text evidence="4 6">Interacts with CUL5 and RNF7 (PubMed:16325183). Interacts with TAB2 and TAB3 (PubMed:33431678).</text>
</comment>
<comment type="interaction">
    <interactant intactId="EBI-2323092">
        <id>Q9Y576</id>
    </interactant>
    <interactant intactId="EBI-1057139">
        <id>Q93034</id>
        <label>CUL5</label>
    </interactant>
    <organismsDiffer>false</organismsDiffer>
    <experiments>8</experiments>
</comment>
<comment type="interaction">
    <interactant intactId="EBI-2323092">
        <id>Q9Y576</id>
    </interactant>
    <interactant intactId="EBI-399080">
        <id>Q92993</id>
        <label>KAT5</label>
    </interactant>
    <organismsDiffer>false</organismsDiffer>
    <experiments>3</experiments>
</comment>
<comment type="interaction">
    <interactant intactId="EBI-2323092">
        <id>Q9Y576</id>
    </interactant>
    <interactant intactId="EBI-11742507">
        <id>Q8TAP4-4</id>
        <label>LMO3</label>
    </interactant>
    <organismsDiffer>false</organismsDiffer>
    <experiments>3</experiments>
</comment>
<comment type="interaction">
    <interactant intactId="EBI-2323092">
        <id>Q9Y576</id>
    </interactant>
    <interactant intactId="EBI-398632">
        <id>Q9UBF6</id>
        <label>RNF7</label>
    </interactant>
    <organismsDiffer>false</organismsDiffer>
    <experiments>4</experiments>
</comment>
<comment type="interaction">
    <interactant intactId="EBI-2323092">
        <id>Q9Y576</id>
    </interactant>
    <interactant intactId="EBI-9090795">
        <id>Q15047-2</id>
        <label>SETDB1</label>
    </interactant>
    <organismsDiffer>false</organismsDiffer>
    <experiments>3</experiments>
</comment>
<comment type="interaction">
    <interactant intactId="EBI-2323092">
        <id>Q9Y576</id>
    </interactant>
    <interactant intactId="EBI-359832">
        <id>P61981</id>
        <label>YWHAG</label>
    </interactant>
    <organismsDiffer>false</organismsDiffer>
    <experiments>3</experiments>
</comment>
<comment type="subcellular location">
    <subcellularLocation>
        <location evidence="6">Cytoplasm</location>
    </subcellularLocation>
</comment>
<comment type="domain">
    <text evidence="1">The SOCS box domain mediates the interaction with the Elongin BC complex, an adapter module in different E3 ubiquitin-protein ligase complexes.</text>
</comment>
<comment type="similarity">
    <text evidence="8">Belongs to the ankyrin SOCS box (ASB) family.</text>
</comment>